<comment type="catalytic activity">
    <reaction>
        <text>D-sorbitol 6-phosphate + NAD(+) = beta-D-fructose 6-phosphate + NADH + H(+)</text>
        <dbReference type="Rhea" id="RHEA:19837"/>
        <dbReference type="ChEBI" id="CHEBI:15378"/>
        <dbReference type="ChEBI" id="CHEBI:57540"/>
        <dbReference type="ChEBI" id="CHEBI:57634"/>
        <dbReference type="ChEBI" id="CHEBI:57945"/>
        <dbReference type="ChEBI" id="CHEBI:60084"/>
        <dbReference type="EC" id="1.1.1.140"/>
    </reaction>
</comment>
<comment type="pathway">
    <text>Carbohydrate metabolism; D-sorbitol degradation; D-fructose 6-phosphate from D-sorbitol 6-phosphate: step 1/1.</text>
</comment>
<comment type="subunit">
    <text evidence="1">Homotetramer.</text>
</comment>
<comment type="similarity">
    <text evidence="3">Belongs to the short-chain dehydrogenases/reductases (SDR) family.</text>
</comment>
<proteinExistence type="inferred from homology"/>
<keyword id="KW-0520">NAD</keyword>
<keyword id="KW-0560">Oxidoreductase</keyword>
<gene>
    <name type="primary">sorD</name>
</gene>
<name>SORD_KLEPN</name>
<accession>P37079</accession>
<protein>
    <recommendedName>
        <fullName>Sorbitol-6-phosphate 2-dehydrogenase</fullName>
        <ecNumber>1.1.1.140</ecNumber>
    </recommendedName>
    <alternativeName>
        <fullName>Glucitol-6-phosphate dehydrogenase</fullName>
    </alternativeName>
    <alternativeName>
        <fullName>Ketosephosphate reductase</fullName>
    </alternativeName>
</protein>
<dbReference type="EC" id="1.1.1.140"/>
<dbReference type="EMBL" id="X66059">
    <property type="protein sequence ID" value="CAA46856.1"/>
    <property type="molecule type" value="Genomic_DNA"/>
</dbReference>
<dbReference type="PIR" id="S50186">
    <property type="entry name" value="S50186"/>
</dbReference>
<dbReference type="RefSeq" id="WP_004177862.1">
    <property type="nucleotide sequence ID" value="NZ_WULI01000005.1"/>
</dbReference>
<dbReference type="SMR" id="P37079"/>
<dbReference type="PATRIC" id="fig|573.1555.peg.3683"/>
<dbReference type="UniPathway" id="UPA00812">
    <property type="reaction ID" value="UER00783"/>
</dbReference>
<dbReference type="GO" id="GO:0048038">
    <property type="term" value="F:quinone binding"/>
    <property type="evidence" value="ECO:0007669"/>
    <property type="project" value="TreeGrafter"/>
</dbReference>
<dbReference type="GO" id="GO:0009010">
    <property type="term" value="F:sorbitol-6-phosphate 2-dehydrogenase activity"/>
    <property type="evidence" value="ECO:0007669"/>
    <property type="project" value="UniProtKB-EC"/>
</dbReference>
<dbReference type="GO" id="GO:0006633">
    <property type="term" value="P:fatty acid biosynthetic process"/>
    <property type="evidence" value="ECO:0007669"/>
    <property type="project" value="TreeGrafter"/>
</dbReference>
<dbReference type="GO" id="GO:0006062">
    <property type="term" value="P:sorbitol catabolic process"/>
    <property type="evidence" value="ECO:0007669"/>
    <property type="project" value="UniProtKB-UniPathway"/>
</dbReference>
<dbReference type="CDD" id="cd05233">
    <property type="entry name" value="SDR_c"/>
    <property type="match status" value="1"/>
</dbReference>
<dbReference type="FunFam" id="3.40.50.720:FF:000084">
    <property type="entry name" value="Short-chain dehydrogenase reductase"/>
    <property type="match status" value="1"/>
</dbReference>
<dbReference type="Gene3D" id="3.40.50.720">
    <property type="entry name" value="NAD(P)-binding Rossmann-like Domain"/>
    <property type="match status" value="1"/>
</dbReference>
<dbReference type="InterPro" id="IPR036291">
    <property type="entry name" value="NAD(P)-bd_dom_sf"/>
</dbReference>
<dbReference type="InterPro" id="IPR020904">
    <property type="entry name" value="Sc_DH/Rdtase_CS"/>
</dbReference>
<dbReference type="InterPro" id="IPR002347">
    <property type="entry name" value="SDR_fam"/>
</dbReference>
<dbReference type="NCBIfam" id="NF004817">
    <property type="entry name" value="PRK06171.1"/>
    <property type="match status" value="1"/>
</dbReference>
<dbReference type="PANTHER" id="PTHR42760:SF133">
    <property type="entry name" value="3-OXOACYL-[ACYL-CARRIER-PROTEIN] REDUCTASE"/>
    <property type="match status" value="1"/>
</dbReference>
<dbReference type="PANTHER" id="PTHR42760">
    <property type="entry name" value="SHORT-CHAIN DEHYDROGENASES/REDUCTASES FAMILY MEMBER"/>
    <property type="match status" value="1"/>
</dbReference>
<dbReference type="Pfam" id="PF00106">
    <property type="entry name" value="adh_short"/>
    <property type="match status" value="1"/>
</dbReference>
<dbReference type="PRINTS" id="PR00081">
    <property type="entry name" value="GDHRDH"/>
</dbReference>
<dbReference type="PRINTS" id="PR00080">
    <property type="entry name" value="SDRFAMILY"/>
</dbReference>
<dbReference type="SUPFAM" id="SSF51735">
    <property type="entry name" value="NAD(P)-binding Rossmann-fold domains"/>
    <property type="match status" value="1"/>
</dbReference>
<dbReference type="PROSITE" id="PS00061">
    <property type="entry name" value="ADH_SHORT"/>
    <property type="match status" value="1"/>
</dbReference>
<evidence type="ECO:0000250" key="1"/>
<evidence type="ECO:0000255" key="2">
    <source>
        <dbReference type="PROSITE-ProRule" id="PRU10001"/>
    </source>
</evidence>
<evidence type="ECO:0000305" key="3"/>
<reference key="1">
    <citation type="journal article" date="1994" name="Biochim. Biophys. Acta">
        <title>Sequence of the sor-operon for L-sorbose utilization from Klebsiella pneumoniae KAY2026.</title>
        <authorList>
            <person name="Wehmeier U.F."/>
            <person name="Lengeler J.W."/>
        </authorList>
    </citation>
    <scope>NUCLEOTIDE SEQUENCE [GENOMIC DNA]</scope>
    <source>
        <strain>1033-5P14 / KAY2026</strain>
    </source>
</reference>
<reference key="2">
    <citation type="journal article" date="1995" name="Res. Microbiol.">
        <title>Sorbose-1-P reductase (SorE) and the glucitol-6-P dehydrogenase (SorD) of the Klebsiella pneumoniae L-sorbose operon belong to the zinc-dependent dehydrogenase family and the short chain alcohol dehydrogenase family, respectively.</title>
        <authorList>
            <person name="Reizer J."/>
            <person name="Reizer A."/>
            <person name="Saier M.H. Jr."/>
        </authorList>
    </citation>
    <scope>SIMILARITY</scope>
</reference>
<feature type="chain" id="PRO_0000054775" description="Sorbitol-6-phosphate 2-dehydrogenase">
    <location>
        <begin position="1"/>
        <end position="267"/>
    </location>
</feature>
<feature type="active site" description="Proton acceptor" evidence="2">
    <location>
        <position position="160"/>
    </location>
</feature>
<feature type="binding site" evidence="1">
    <location>
        <begin position="9"/>
        <end position="38"/>
    </location>
    <ligand>
        <name>NAD(+)</name>
        <dbReference type="ChEBI" id="CHEBI:57540"/>
    </ligand>
</feature>
<feature type="binding site" evidence="1">
    <location>
        <position position="147"/>
    </location>
    <ligand>
        <name>substrate</name>
    </ligand>
</feature>
<sequence length="267" mass="29005">MNTWLNLKDNVIIVTGGASGIGLAIVDELLSQGAHVQMIDIHGGDRHHNGDNYHFWSTDISSATEVQQTIDAIIQRWSRIDGLVNNAGVNFPRLLVDEKAPAGRYELNEAAFEKMVNINQKGVFFMSQAVARQMVKQRAGVIVNVSSESGLEGSEGQSCYAATKAALNSFTRSWSKELGKYGIRVVGVAPGILEKTGLRTPEYEEALAWTRNITVEQLREGYTKNAIPIGRAGKLSEVADFVCYLLSARASYITGVTTNIAGGKTRG</sequence>
<organism>
    <name type="scientific">Klebsiella pneumoniae</name>
    <dbReference type="NCBI Taxonomy" id="573"/>
    <lineage>
        <taxon>Bacteria</taxon>
        <taxon>Pseudomonadati</taxon>
        <taxon>Pseudomonadota</taxon>
        <taxon>Gammaproteobacteria</taxon>
        <taxon>Enterobacterales</taxon>
        <taxon>Enterobacteriaceae</taxon>
        <taxon>Klebsiella/Raoultella group</taxon>
        <taxon>Klebsiella</taxon>
        <taxon>Klebsiella pneumoniae complex</taxon>
    </lineage>
</organism>